<sequence>MEPRDNQAEASYTFGDRSSSDIVVRLRNEEGRDDWIYCHSKILSEKSQYFADRLSDKWPTCKILDSRYCVEVICQESDYDHHINLLRLLYVVSDDVHEDNLCHNVKSALGILSVAKELSCPQIVTACVNYLEAVPWEEGEEEEILRIVPRIGSEAEPILARLQPVDQSAVLEIFVSAFRFATSSPPLLLGDIKSSAQEQIEYMITEDDDAPLLIADEEVKLEVKQCVKSLFVRFFQCLEEITLKPVESEVINKKGSFRMVLSDMCWVFQILTKMEVVRDFVITWADISEKLVKVVEQLETTVVEAVEIRVKVIEVTAKVIEAIGYGTVILPTAKRLQMVKLWLPFVRNTKPLVDSPVREDEENDTVRYKIDGEIWQALESSFVSIILALPSADQAEILTEWLSKNGLYPDLTEAFEVWCYRSKVAKRRLGLVGGEEENGMS</sequence>
<comment type="function">
    <text evidence="1">May act as a substrate-specific adapter of an E3 ubiquitin-protein ligase complex (CUL3-RBX1-BTB) which mediates the ubiquitination and subsequent proteasomal degradation of target proteins.</text>
</comment>
<comment type="pathway">
    <text>Protein modification; protein ubiquitination.</text>
</comment>
<comment type="domain">
    <text evidence="3">The BTB/POZ domain mediates the interaction with some component of ubiquitin ligase complexes.</text>
</comment>
<protein>
    <recommendedName>
        <fullName>BTB/POZ domain-containing protein At3g05675</fullName>
    </recommendedName>
</protein>
<keyword id="KW-1185">Reference proteome</keyword>
<keyword id="KW-0833">Ubl conjugation pathway</keyword>
<evidence type="ECO:0000250" key="1"/>
<evidence type="ECO:0000255" key="2">
    <source>
        <dbReference type="PROSITE-ProRule" id="PRU00037"/>
    </source>
</evidence>
<evidence type="ECO:0000269" key="3">
    <source>
    </source>
</evidence>
<evidence type="ECO:0000305" key="4"/>
<dbReference type="EMBL" id="AC011620">
    <property type="status" value="NOT_ANNOTATED_CDS"/>
    <property type="molecule type" value="Genomic_DNA"/>
</dbReference>
<dbReference type="EMBL" id="CP002686">
    <property type="protein sequence ID" value="AEE74275.1"/>
    <property type="molecule type" value="Genomic_DNA"/>
</dbReference>
<dbReference type="EMBL" id="CP002686">
    <property type="protein sequence ID" value="AEE74276.1"/>
    <property type="molecule type" value="Genomic_DNA"/>
</dbReference>
<dbReference type="EMBL" id="CP002686">
    <property type="protein sequence ID" value="ANM63417.1"/>
    <property type="molecule type" value="Genomic_DNA"/>
</dbReference>
<dbReference type="EMBL" id="AY091003">
    <property type="protein sequence ID" value="AAM14025.1"/>
    <property type="molecule type" value="mRNA"/>
</dbReference>
<dbReference type="EMBL" id="AY084926">
    <property type="protein sequence ID" value="AAM61488.1"/>
    <property type="molecule type" value="mRNA"/>
</dbReference>
<dbReference type="EMBL" id="AK229544">
    <property type="protein sequence ID" value="BAF01397.1"/>
    <property type="molecule type" value="mRNA"/>
</dbReference>
<dbReference type="RefSeq" id="NP_001325506.1">
    <property type="nucleotide sequence ID" value="NM_001337598.1"/>
</dbReference>
<dbReference type="RefSeq" id="NP_566255.1">
    <property type="nucleotide sequence ID" value="NM_111441.3"/>
</dbReference>
<dbReference type="RefSeq" id="NP_850518.1">
    <property type="nucleotide sequence ID" value="NM_180187.2"/>
</dbReference>
<dbReference type="SMR" id="Q8RX01"/>
<dbReference type="FunCoup" id="Q8RX01">
    <property type="interactions" value="1738"/>
</dbReference>
<dbReference type="STRING" id="3702.Q8RX01"/>
<dbReference type="PaxDb" id="3702-AT3G05675.2"/>
<dbReference type="ProteomicsDB" id="243103"/>
<dbReference type="EnsemblPlants" id="AT3G05675.1">
    <property type="protein sequence ID" value="AT3G05675.1"/>
    <property type="gene ID" value="AT3G05675"/>
</dbReference>
<dbReference type="EnsemblPlants" id="AT3G05675.2">
    <property type="protein sequence ID" value="AT3G05675.2"/>
    <property type="gene ID" value="AT3G05675"/>
</dbReference>
<dbReference type="EnsemblPlants" id="AT3G05675.3">
    <property type="protein sequence ID" value="AT3G05675.3"/>
    <property type="gene ID" value="AT3G05675"/>
</dbReference>
<dbReference type="GeneID" id="819735"/>
<dbReference type="Gramene" id="AT3G05675.1">
    <property type="protein sequence ID" value="AT3G05675.1"/>
    <property type="gene ID" value="AT3G05675"/>
</dbReference>
<dbReference type="Gramene" id="AT3G05675.2">
    <property type="protein sequence ID" value="AT3G05675.2"/>
    <property type="gene ID" value="AT3G05675"/>
</dbReference>
<dbReference type="Gramene" id="AT3G05675.3">
    <property type="protein sequence ID" value="AT3G05675.3"/>
    <property type="gene ID" value="AT3G05675"/>
</dbReference>
<dbReference type="KEGG" id="ath:AT3G05675"/>
<dbReference type="Araport" id="AT3G05675"/>
<dbReference type="TAIR" id="AT3G05675"/>
<dbReference type="eggNOG" id="ENOG502QSA0">
    <property type="taxonomic scope" value="Eukaryota"/>
</dbReference>
<dbReference type="HOGENOM" id="CLU_025834_2_0_1"/>
<dbReference type="InParanoid" id="Q8RX01"/>
<dbReference type="OMA" id="EWLENQQ"/>
<dbReference type="PhylomeDB" id="Q8RX01"/>
<dbReference type="UniPathway" id="UPA00143"/>
<dbReference type="PRO" id="PR:Q8RX01"/>
<dbReference type="Proteomes" id="UP000006548">
    <property type="component" value="Chromosome 3"/>
</dbReference>
<dbReference type="ExpressionAtlas" id="Q8RX01">
    <property type="expression patterns" value="baseline and differential"/>
</dbReference>
<dbReference type="GO" id="GO:0016567">
    <property type="term" value="P:protein ubiquitination"/>
    <property type="evidence" value="ECO:0007669"/>
    <property type="project" value="UniProtKB-UniPathway"/>
</dbReference>
<dbReference type="Gene3D" id="3.30.710.10">
    <property type="entry name" value="Potassium Channel Kv1.1, Chain A"/>
    <property type="match status" value="1"/>
</dbReference>
<dbReference type="InterPro" id="IPR000210">
    <property type="entry name" value="BTB/POZ_dom"/>
</dbReference>
<dbReference type="InterPro" id="IPR038920">
    <property type="entry name" value="BTB/POZ_dom_prot"/>
</dbReference>
<dbReference type="InterPro" id="IPR011333">
    <property type="entry name" value="SKP1/BTB/POZ_sf"/>
</dbReference>
<dbReference type="PANTHER" id="PTHR31060:SF30">
    <property type="entry name" value="OS07G0668800 PROTEIN"/>
    <property type="match status" value="1"/>
</dbReference>
<dbReference type="PANTHER" id="PTHR31060">
    <property type="entry name" value="OSJNBA0011J08.25 PROTEIN-RELATED"/>
    <property type="match status" value="1"/>
</dbReference>
<dbReference type="Pfam" id="PF00651">
    <property type="entry name" value="BTB"/>
    <property type="match status" value="1"/>
</dbReference>
<dbReference type="SUPFAM" id="SSF54695">
    <property type="entry name" value="POZ domain"/>
    <property type="match status" value="1"/>
</dbReference>
<dbReference type="PROSITE" id="PS50097">
    <property type="entry name" value="BTB"/>
    <property type="match status" value="1"/>
</dbReference>
<feature type="chain" id="PRO_0000408529" description="BTB/POZ domain-containing protein At3g05675">
    <location>
        <begin position="1"/>
        <end position="441"/>
    </location>
</feature>
<feature type="domain" description="BTB" evidence="2">
    <location>
        <begin position="20"/>
        <end position="98"/>
    </location>
</feature>
<feature type="sequence conflict" description="In Ref. 4; AAM61488." evidence="4" ref="4">
    <original>V</original>
    <variation>I</variation>
    <location>
        <position position="148"/>
    </location>
</feature>
<reference key="1">
    <citation type="journal article" date="2000" name="Nature">
        <title>Sequence and analysis of chromosome 3 of the plant Arabidopsis thaliana.</title>
        <authorList>
            <person name="Salanoubat M."/>
            <person name="Lemcke K."/>
            <person name="Rieger M."/>
            <person name="Ansorge W."/>
            <person name="Unseld M."/>
            <person name="Fartmann B."/>
            <person name="Valle G."/>
            <person name="Bloecker H."/>
            <person name="Perez-Alonso M."/>
            <person name="Obermaier B."/>
            <person name="Delseny M."/>
            <person name="Boutry M."/>
            <person name="Grivell L.A."/>
            <person name="Mache R."/>
            <person name="Puigdomenech P."/>
            <person name="De Simone V."/>
            <person name="Choisne N."/>
            <person name="Artiguenave F."/>
            <person name="Robert C."/>
            <person name="Brottier P."/>
            <person name="Wincker P."/>
            <person name="Cattolico L."/>
            <person name="Weissenbach J."/>
            <person name="Saurin W."/>
            <person name="Quetier F."/>
            <person name="Schaefer M."/>
            <person name="Mueller-Auer S."/>
            <person name="Gabel C."/>
            <person name="Fuchs M."/>
            <person name="Benes V."/>
            <person name="Wurmbach E."/>
            <person name="Drzonek H."/>
            <person name="Erfle H."/>
            <person name="Jordan N."/>
            <person name="Bangert S."/>
            <person name="Wiedelmann R."/>
            <person name="Kranz H."/>
            <person name="Voss H."/>
            <person name="Holland R."/>
            <person name="Brandt P."/>
            <person name="Nyakatura G."/>
            <person name="Vezzi A."/>
            <person name="D'Angelo M."/>
            <person name="Pallavicini A."/>
            <person name="Toppo S."/>
            <person name="Simionati B."/>
            <person name="Conrad A."/>
            <person name="Hornischer K."/>
            <person name="Kauer G."/>
            <person name="Loehnert T.-H."/>
            <person name="Nordsiek G."/>
            <person name="Reichelt J."/>
            <person name="Scharfe M."/>
            <person name="Schoen O."/>
            <person name="Bargues M."/>
            <person name="Terol J."/>
            <person name="Climent J."/>
            <person name="Navarro P."/>
            <person name="Collado C."/>
            <person name="Perez-Perez A."/>
            <person name="Ottenwaelder B."/>
            <person name="Duchemin D."/>
            <person name="Cooke R."/>
            <person name="Laudie M."/>
            <person name="Berger-Llauro C."/>
            <person name="Purnelle B."/>
            <person name="Masuy D."/>
            <person name="de Haan M."/>
            <person name="Maarse A.C."/>
            <person name="Alcaraz J.-P."/>
            <person name="Cottet A."/>
            <person name="Casacuberta E."/>
            <person name="Monfort A."/>
            <person name="Argiriou A."/>
            <person name="Flores M."/>
            <person name="Liguori R."/>
            <person name="Vitale D."/>
            <person name="Mannhaupt G."/>
            <person name="Haase D."/>
            <person name="Schoof H."/>
            <person name="Rudd S."/>
            <person name="Zaccaria P."/>
            <person name="Mewes H.-W."/>
            <person name="Mayer K.F.X."/>
            <person name="Kaul S."/>
            <person name="Town C.D."/>
            <person name="Koo H.L."/>
            <person name="Tallon L.J."/>
            <person name="Jenkins J."/>
            <person name="Rooney T."/>
            <person name="Rizzo M."/>
            <person name="Walts A."/>
            <person name="Utterback T."/>
            <person name="Fujii C.Y."/>
            <person name="Shea T.P."/>
            <person name="Creasy T.H."/>
            <person name="Haas B."/>
            <person name="Maiti R."/>
            <person name="Wu D."/>
            <person name="Peterson J."/>
            <person name="Van Aken S."/>
            <person name="Pai G."/>
            <person name="Militscher J."/>
            <person name="Sellers P."/>
            <person name="Gill J.E."/>
            <person name="Feldblyum T.V."/>
            <person name="Preuss D."/>
            <person name="Lin X."/>
            <person name="Nierman W.C."/>
            <person name="Salzberg S.L."/>
            <person name="White O."/>
            <person name="Venter J.C."/>
            <person name="Fraser C.M."/>
            <person name="Kaneko T."/>
            <person name="Nakamura Y."/>
            <person name="Sato S."/>
            <person name="Kato T."/>
            <person name="Asamizu E."/>
            <person name="Sasamoto S."/>
            <person name="Kimura T."/>
            <person name="Idesawa K."/>
            <person name="Kawashima K."/>
            <person name="Kishida Y."/>
            <person name="Kiyokawa C."/>
            <person name="Kohara M."/>
            <person name="Matsumoto M."/>
            <person name="Matsuno A."/>
            <person name="Muraki A."/>
            <person name="Nakayama S."/>
            <person name="Nakazaki N."/>
            <person name="Shinpo S."/>
            <person name="Takeuchi C."/>
            <person name="Wada T."/>
            <person name="Watanabe A."/>
            <person name="Yamada M."/>
            <person name="Yasuda M."/>
            <person name="Tabata S."/>
        </authorList>
    </citation>
    <scope>NUCLEOTIDE SEQUENCE [LARGE SCALE GENOMIC DNA]</scope>
    <source>
        <strain>cv. Columbia</strain>
    </source>
</reference>
<reference key="2">
    <citation type="journal article" date="2017" name="Plant J.">
        <title>Araport11: a complete reannotation of the Arabidopsis thaliana reference genome.</title>
        <authorList>
            <person name="Cheng C.Y."/>
            <person name="Krishnakumar V."/>
            <person name="Chan A.P."/>
            <person name="Thibaud-Nissen F."/>
            <person name="Schobel S."/>
            <person name="Town C.D."/>
        </authorList>
    </citation>
    <scope>GENOME REANNOTATION</scope>
    <source>
        <strain>cv. Columbia</strain>
    </source>
</reference>
<reference key="3">
    <citation type="journal article" date="2003" name="Science">
        <title>Empirical analysis of transcriptional activity in the Arabidopsis genome.</title>
        <authorList>
            <person name="Yamada K."/>
            <person name="Lim J."/>
            <person name="Dale J.M."/>
            <person name="Chen H."/>
            <person name="Shinn P."/>
            <person name="Palm C.J."/>
            <person name="Southwick A.M."/>
            <person name="Wu H.C."/>
            <person name="Kim C.J."/>
            <person name="Nguyen M."/>
            <person name="Pham P.K."/>
            <person name="Cheuk R.F."/>
            <person name="Karlin-Newmann G."/>
            <person name="Liu S.X."/>
            <person name="Lam B."/>
            <person name="Sakano H."/>
            <person name="Wu T."/>
            <person name="Yu G."/>
            <person name="Miranda M."/>
            <person name="Quach H.L."/>
            <person name="Tripp M."/>
            <person name="Chang C.H."/>
            <person name="Lee J.M."/>
            <person name="Toriumi M.J."/>
            <person name="Chan M.M."/>
            <person name="Tang C.C."/>
            <person name="Onodera C.S."/>
            <person name="Deng J.M."/>
            <person name="Akiyama K."/>
            <person name="Ansari Y."/>
            <person name="Arakawa T."/>
            <person name="Banh J."/>
            <person name="Banno F."/>
            <person name="Bowser L."/>
            <person name="Brooks S.Y."/>
            <person name="Carninci P."/>
            <person name="Chao Q."/>
            <person name="Choy N."/>
            <person name="Enju A."/>
            <person name="Goldsmith A.D."/>
            <person name="Gurjal M."/>
            <person name="Hansen N.F."/>
            <person name="Hayashizaki Y."/>
            <person name="Johnson-Hopson C."/>
            <person name="Hsuan V.W."/>
            <person name="Iida K."/>
            <person name="Karnes M."/>
            <person name="Khan S."/>
            <person name="Koesema E."/>
            <person name="Ishida J."/>
            <person name="Jiang P.X."/>
            <person name="Jones T."/>
            <person name="Kawai J."/>
            <person name="Kamiya A."/>
            <person name="Meyers C."/>
            <person name="Nakajima M."/>
            <person name="Narusaka M."/>
            <person name="Seki M."/>
            <person name="Sakurai T."/>
            <person name="Satou M."/>
            <person name="Tamse R."/>
            <person name="Vaysberg M."/>
            <person name="Wallender E.K."/>
            <person name="Wong C."/>
            <person name="Yamamura Y."/>
            <person name="Yuan S."/>
            <person name="Shinozaki K."/>
            <person name="Davis R.W."/>
            <person name="Theologis A."/>
            <person name="Ecker J.R."/>
        </authorList>
    </citation>
    <scope>NUCLEOTIDE SEQUENCE [LARGE SCALE MRNA]</scope>
    <source>
        <strain>cv. Columbia</strain>
    </source>
</reference>
<reference key="4">
    <citation type="submission" date="2002-03" db="EMBL/GenBank/DDBJ databases">
        <title>Full-length cDNA from Arabidopsis thaliana.</title>
        <authorList>
            <person name="Brover V.V."/>
            <person name="Troukhan M.E."/>
            <person name="Alexandrov N.A."/>
            <person name="Lu Y.-P."/>
            <person name="Flavell R.B."/>
            <person name="Feldmann K.A."/>
        </authorList>
    </citation>
    <scope>NUCLEOTIDE SEQUENCE [LARGE SCALE MRNA]</scope>
</reference>
<reference key="5">
    <citation type="submission" date="2006-07" db="EMBL/GenBank/DDBJ databases">
        <title>Large-scale analysis of RIKEN Arabidopsis full-length (RAFL) cDNAs.</title>
        <authorList>
            <person name="Totoki Y."/>
            <person name="Seki M."/>
            <person name="Ishida J."/>
            <person name="Nakajima M."/>
            <person name="Enju A."/>
            <person name="Kamiya A."/>
            <person name="Narusaka M."/>
            <person name="Shin-i T."/>
            <person name="Nakagawa M."/>
            <person name="Sakamoto N."/>
            <person name="Oishi K."/>
            <person name="Kohara Y."/>
            <person name="Kobayashi M."/>
            <person name="Toyoda A."/>
            <person name="Sakaki Y."/>
            <person name="Sakurai T."/>
            <person name="Iida K."/>
            <person name="Akiyama K."/>
            <person name="Satou M."/>
            <person name="Toyoda T."/>
            <person name="Konagaya A."/>
            <person name="Carninci P."/>
            <person name="Kawai J."/>
            <person name="Hayashizaki Y."/>
            <person name="Shinozaki K."/>
        </authorList>
    </citation>
    <scope>NUCLEOTIDE SEQUENCE [LARGE SCALE MRNA] OF 1-409</scope>
    <source>
        <strain>cv. Columbia</strain>
    </source>
</reference>
<reference key="6">
    <citation type="journal article" date="2005" name="J. Biol. Chem.">
        <title>Cullins 3a and 3b assemble with members of the broad complex/tramtrack/bric-a-brac (BTB) protein family to form essential ubiquitin-protein ligases (E3s) in Arabidopsis.</title>
        <authorList>
            <person name="Gingerich D.J."/>
            <person name="Gagne J.M."/>
            <person name="Salter D.W."/>
            <person name="Hellmann H."/>
            <person name="Estelle M."/>
            <person name="Ma L."/>
            <person name="Vierstra R.D."/>
        </authorList>
    </citation>
    <scope>DOMAIN BTB</scope>
</reference>
<gene>
    <name type="ordered locus">At3g05675</name>
    <name type="ORF">F18C1</name>
</gene>
<name>Y3567_ARATH</name>
<proteinExistence type="evidence at transcript level"/>
<organism>
    <name type="scientific">Arabidopsis thaliana</name>
    <name type="common">Mouse-ear cress</name>
    <dbReference type="NCBI Taxonomy" id="3702"/>
    <lineage>
        <taxon>Eukaryota</taxon>
        <taxon>Viridiplantae</taxon>
        <taxon>Streptophyta</taxon>
        <taxon>Embryophyta</taxon>
        <taxon>Tracheophyta</taxon>
        <taxon>Spermatophyta</taxon>
        <taxon>Magnoliopsida</taxon>
        <taxon>eudicotyledons</taxon>
        <taxon>Gunneridae</taxon>
        <taxon>Pentapetalae</taxon>
        <taxon>rosids</taxon>
        <taxon>malvids</taxon>
        <taxon>Brassicales</taxon>
        <taxon>Brassicaceae</taxon>
        <taxon>Camelineae</taxon>
        <taxon>Arabidopsis</taxon>
    </lineage>
</organism>
<accession>Q8RX01</accession>
<accession>Q0WNA3</accession>
<accession>Q8LFC6</accession>